<dbReference type="EMBL" id="CP000727">
    <property type="protein sequence ID" value="ABS37225.1"/>
    <property type="molecule type" value="Genomic_DNA"/>
</dbReference>
<dbReference type="EMBL" id="AM412317">
    <property type="protein sequence ID" value="CAL83396.1"/>
    <property type="molecule type" value="Genomic_DNA"/>
</dbReference>
<dbReference type="RefSeq" id="WP_003402814.1">
    <property type="nucleotide sequence ID" value="NC_009698.1"/>
</dbReference>
<dbReference type="RefSeq" id="YP_001254357.1">
    <property type="nucleotide sequence ID" value="NC_009495.1"/>
</dbReference>
<dbReference type="RefSeq" id="YP_001387654.1">
    <property type="nucleotide sequence ID" value="NC_009698.1"/>
</dbReference>
<dbReference type="SMR" id="A5I2X9"/>
<dbReference type="GeneID" id="5186111"/>
<dbReference type="KEGG" id="cbh:CLC_1799"/>
<dbReference type="KEGG" id="cbo:CBO1856"/>
<dbReference type="PATRIC" id="fig|413999.7.peg.1827"/>
<dbReference type="HOGENOM" id="CLU_045647_5_3_9"/>
<dbReference type="PRO" id="PR:A5I2X9"/>
<dbReference type="Proteomes" id="UP000001986">
    <property type="component" value="Chromosome"/>
</dbReference>
<dbReference type="GO" id="GO:0005737">
    <property type="term" value="C:cytoplasm"/>
    <property type="evidence" value="ECO:0007669"/>
    <property type="project" value="UniProtKB-SubCell"/>
</dbReference>
<dbReference type="GO" id="GO:0051301">
    <property type="term" value="P:cell division"/>
    <property type="evidence" value="ECO:0007669"/>
    <property type="project" value="UniProtKB-KW"/>
</dbReference>
<dbReference type="GO" id="GO:0051304">
    <property type="term" value="P:chromosome separation"/>
    <property type="evidence" value="ECO:0007669"/>
    <property type="project" value="InterPro"/>
</dbReference>
<dbReference type="GO" id="GO:0006260">
    <property type="term" value="P:DNA replication"/>
    <property type="evidence" value="ECO:0007669"/>
    <property type="project" value="UniProtKB-UniRule"/>
</dbReference>
<dbReference type="Gene3D" id="1.10.10.10">
    <property type="entry name" value="Winged helix-like DNA-binding domain superfamily/Winged helix DNA-binding domain"/>
    <property type="match status" value="2"/>
</dbReference>
<dbReference type="HAMAP" id="MF_01804">
    <property type="entry name" value="ScpB"/>
    <property type="match status" value="1"/>
</dbReference>
<dbReference type="InterPro" id="IPR005234">
    <property type="entry name" value="ScpB_csome_segregation"/>
</dbReference>
<dbReference type="InterPro" id="IPR036388">
    <property type="entry name" value="WH-like_DNA-bd_sf"/>
</dbReference>
<dbReference type="InterPro" id="IPR036390">
    <property type="entry name" value="WH_DNA-bd_sf"/>
</dbReference>
<dbReference type="NCBIfam" id="TIGR00281">
    <property type="entry name" value="SMC-Scp complex subunit ScpB"/>
    <property type="match status" value="1"/>
</dbReference>
<dbReference type="PANTHER" id="PTHR34298">
    <property type="entry name" value="SEGREGATION AND CONDENSATION PROTEIN B"/>
    <property type="match status" value="1"/>
</dbReference>
<dbReference type="PANTHER" id="PTHR34298:SF2">
    <property type="entry name" value="SEGREGATION AND CONDENSATION PROTEIN B"/>
    <property type="match status" value="1"/>
</dbReference>
<dbReference type="Pfam" id="PF04079">
    <property type="entry name" value="SMC_ScpB"/>
    <property type="match status" value="1"/>
</dbReference>
<dbReference type="PIRSF" id="PIRSF019345">
    <property type="entry name" value="ScpB"/>
    <property type="match status" value="1"/>
</dbReference>
<dbReference type="SUPFAM" id="SSF46785">
    <property type="entry name" value="Winged helix' DNA-binding domain"/>
    <property type="match status" value="2"/>
</dbReference>
<proteinExistence type="inferred from homology"/>
<keyword id="KW-0131">Cell cycle</keyword>
<keyword id="KW-0132">Cell division</keyword>
<keyword id="KW-0159">Chromosome partition</keyword>
<keyword id="KW-0963">Cytoplasm</keyword>
<keyword id="KW-1185">Reference proteome</keyword>
<feature type="chain" id="PRO_1000069952" description="Segregation and condensation protein B">
    <location>
        <begin position="1"/>
        <end position="193"/>
    </location>
</feature>
<evidence type="ECO:0000255" key="1">
    <source>
        <dbReference type="HAMAP-Rule" id="MF_01804"/>
    </source>
</evidence>
<name>SCPB_CLOBH</name>
<comment type="function">
    <text evidence="1">Participates in chromosomal partition during cell division. May act via the formation of a condensin-like complex containing Smc and ScpA that pull DNA away from mid-cell into both cell halves.</text>
</comment>
<comment type="subunit">
    <text evidence="1">Homodimer. Homodimerization may be required to stabilize the binding of ScpA to the Smc head domains. Component of a cohesin-like complex composed of ScpA, ScpB and the Smc homodimer, in which ScpA and ScpB bind to the head domain of Smc. The presence of the three proteins is required for the association of the complex with DNA.</text>
</comment>
<comment type="subcellular location">
    <subcellularLocation>
        <location evidence="1">Cytoplasm</location>
    </subcellularLocation>
    <text evidence="1">Associated with two foci at the outer edges of the nucleoid region in young cells, and at four foci within both cell halves in older cells.</text>
</comment>
<comment type="similarity">
    <text evidence="1">Belongs to the ScpB family.</text>
</comment>
<organism>
    <name type="scientific">Clostridium botulinum (strain Hall / ATCC 3502 / NCTC 13319 / Type A)</name>
    <dbReference type="NCBI Taxonomy" id="441771"/>
    <lineage>
        <taxon>Bacteria</taxon>
        <taxon>Bacillati</taxon>
        <taxon>Bacillota</taxon>
        <taxon>Clostridia</taxon>
        <taxon>Eubacteriales</taxon>
        <taxon>Clostridiaceae</taxon>
        <taxon>Clostridium</taxon>
    </lineage>
</organism>
<protein>
    <recommendedName>
        <fullName evidence="1">Segregation and condensation protein B</fullName>
    </recommendedName>
</protein>
<sequence length="193" mass="21982">MNKDHEEQLEINEVSQKNKYKSIIESLLFMSGEPINIKDLATILNCKQDKVSSLLNEMNNSYVGKDRGIKILIHNRAVQLVTKPENSIYVEKLLKTNVRQSLSQAALETLSIIAYKQPITRVAIDEIRGVKSDRAIYTLLEKNIIKECGRLDVPGKPILYGTTEEFLKFFGLDSIEAIPNLEDLLKEFSKEEN</sequence>
<reference key="1">
    <citation type="journal article" date="2007" name="Genome Res.">
        <title>Genome sequence of a proteolytic (Group I) Clostridium botulinum strain Hall A and comparative analysis of the clostridial genomes.</title>
        <authorList>
            <person name="Sebaihia M."/>
            <person name="Peck M.W."/>
            <person name="Minton N.P."/>
            <person name="Thomson N.R."/>
            <person name="Holden M.T.G."/>
            <person name="Mitchell W.J."/>
            <person name="Carter A.T."/>
            <person name="Bentley S.D."/>
            <person name="Mason D.R."/>
            <person name="Crossman L."/>
            <person name="Paul C.J."/>
            <person name="Ivens A."/>
            <person name="Wells-Bennik M.H.J."/>
            <person name="Davis I.J."/>
            <person name="Cerdeno-Tarraga A.M."/>
            <person name="Churcher C."/>
            <person name="Quail M.A."/>
            <person name="Chillingworth T."/>
            <person name="Feltwell T."/>
            <person name="Fraser A."/>
            <person name="Goodhead I."/>
            <person name="Hance Z."/>
            <person name="Jagels K."/>
            <person name="Larke N."/>
            <person name="Maddison M."/>
            <person name="Moule S."/>
            <person name="Mungall K."/>
            <person name="Norbertczak H."/>
            <person name="Rabbinowitsch E."/>
            <person name="Sanders M."/>
            <person name="Simmonds M."/>
            <person name="White B."/>
            <person name="Whithead S."/>
            <person name="Parkhill J."/>
        </authorList>
    </citation>
    <scope>NUCLEOTIDE SEQUENCE [LARGE SCALE GENOMIC DNA]</scope>
    <source>
        <strain>Hall / ATCC 3502 / NCTC 13319 / Type A</strain>
    </source>
</reference>
<reference key="2">
    <citation type="journal article" date="2007" name="PLoS ONE">
        <title>Analysis of the neurotoxin complex genes in Clostridium botulinum A1-A4 and B1 strains: BoNT/A3, /Ba4 and /B1 clusters are located within plasmids.</title>
        <authorList>
            <person name="Smith T.J."/>
            <person name="Hill K.K."/>
            <person name="Foley B.T."/>
            <person name="Detter J.C."/>
            <person name="Munk A.C."/>
            <person name="Bruce D.C."/>
            <person name="Doggett N.A."/>
            <person name="Smith L.A."/>
            <person name="Marks J.D."/>
            <person name="Xie G."/>
            <person name="Brettin T.S."/>
        </authorList>
    </citation>
    <scope>NUCLEOTIDE SEQUENCE [LARGE SCALE GENOMIC DNA]</scope>
    <source>
        <strain>Hall / ATCC 3502 / NCTC 13319 / Type A</strain>
    </source>
</reference>
<gene>
    <name evidence="1" type="primary">scpB</name>
    <name type="ordered locus">CBO1856</name>
    <name type="ordered locus">CLC_1799</name>
</gene>
<accession>A5I2X9</accession>
<accession>A7G4D9</accession>